<feature type="chain" id="PRO_0000276903" description="Small ribosomal subunit protein uS19c">
    <location>
        <begin position="1"/>
        <end position="92"/>
    </location>
</feature>
<accession>Q4VZM8</accession>
<accession>A5J1X5</accession>
<geneLocation type="chloroplast"/>
<protein>
    <recommendedName>
        <fullName evidence="1">Small ribosomal subunit protein uS19c</fullName>
    </recommendedName>
    <alternativeName>
        <fullName evidence="2">30S ribosomal protein S19, chloroplastic</fullName>
    </alternativeName>
</protein>
<evidence type="ECO:0000255" key="1">
    <source>
        <dbReference type="HAMAP-Rule" id="MF_00531"/>
    </source>
</evidence>
<evidence type="ECO:0000305" key="2"/>
<gene>
    <name evidence="1" type="primary">rps19</name>
    <name type="ordered locus">CsCp082</name>
</gene>
<organism>
    <name type="scientific">Cucumis sativus</name>
    <name type="common">Cucumber</name>
    <dbReference type="NCBI Taxonomy" id="3659"/>
    <lineage>
        <taxon>Eukaryota</taxon>
        <taxon>Viridiplantae</taxon>
        <taxon>Streptophyta</taxon>
        <taxon>Embryophyta</taxon>
        <taxon>Tracheophyta</taxon>
        <taxon>Spermatophyta</taxon>
        <taxon>Magnoliopsida</taxon>
        <taxon>eudicotyledons</taxon>
        <taxon>Gunneridae</taxon>
        <taxon>Pentapetalae</taxon>
        <taxon>rosids</taxon>
        <taxon>fabids</taxon>
        <taxon>Cucurbitales</taxon>
        <taxon>Cucurbitaceae</taxon>
        <taxon>Benincaseae</taxon>
        <taxon>Cucumis</taxon>
    </lineage>
</organism>
<name>RR19_CUCSA</name>
<reference key="1">
    <citation type="journal article" date="2006" name="Plant Cell Rep.">
        <title>Complete sequence and organization of the cucumber (Cucumis sativus L. cv. Baekmibaekdadagi) chloroplast genome.</title>
        <authorList>
            <person name="Kim J.-S."/>
            <person name="Jung J.D."/>
            <person name="Lee J.-A."/>
            <person name="Park H.-W."/>
            <person name="Oh K.-H."/>
            <person name="Jeong W.J."/>
            <person name="Choi D.-W."/>
            <person name="Liu J.R."/>
            <person name="Cho K.Y."/>
        </authorList>
    </citation>
    <scope>NUCLEOTIDE SEQUENCE [LARGE SCALE GENOMIC DNA]</scope>
    <source>
        <strain>cv. Baekmibaekdadagi</strain>
    </source>
</reference>
<reference key="2">
    <citation type="journal article" date="2007" name="Cell. Mol. Biol. Lett.">
        <title>The complete structure of the cucumber (Cucumis sativus L.) chloroplast genome: its composition and comparative analysis.</title>
        <authorList>
            <person name="Plader W.W."/>
            <person name="Yukawa Y."/>
            <person name="Sugiura M."/>
            <person name="Malepszy S."/>
        </authorList>
    </citation>
    <scope>NUCLEOTIDE SEQUENCE [LARGE SCALE GENOMIC DNA]</scope>
    <source>
        <strain>cv. Borszczagowski</strain>
    </source>
</reference>
<reference key="3">
    <citation type="journal article" date="2007" name="Genome">
        <title>Sequencing cucumber (Cucumis sativus L.) chloroplast genomes identifies differences between chilling-tolerant and -susceptible cucumber lines.</title>
        <authorList>
            <person name="Chung S.-M."/>
            <person name="Gordon V.S."/>
            <person name="Staub J.E."/>
        </authorList>
    </citation>
    <scope>NUCLEOTIDE SEQUENCE [LARGE SCALE GENOMIC DNA]</scope>
    <source>
        <strain>cv. Chipper</strain>
        <strain>cv. Gy14</strain>
    </source>
</reference>
<dbReference type="EMBL" id="DQ119058">
    <property type="protein sequence ID" value="AAZ94690.1"/>
    <property type="molecule type" value="Genomic_DNA"/>
</dbReference>
<dbReference type="EMBL" id="AJ970307">
    <property type="protein sequence ID" value="CAJ00799.1"/>
    <property type="molecule type" value="Genomic_DNA"/>
</dbReference>
<dbReference type="EMBL" id="DQ865975">
    <property type="protein sequence ID" value="ABI97457.1"/>
    <property type="molecule type" value="Genomic_DNA"/>
</dbReference>
<dbReference type="EMBL" id="DQ865976">
    <property type="protein sequence ID" value="ABI98786.1"/>
    <property type="molecule type" value="Genomic_DNA"/>
</dbReference>
<dbReference type="RefSeq" id="YP_247640.1">
    <property type="nucleotide sequence ID" value="NC_007144.1"/>
</dbReference>
<dbReference type="SMR" id="Q4VZM8"/>
<dbReference type="GeneID" id="3429312"/>
<dbReference type="KEGG" id="csv:3429312"/>
<dbReference type="OrthoDB" id="2043at2759"/>
<dbReference type="GO" id="GO:0009507">
    <property type="term" value="C:chloroplast"/>
    <property type="evidence" value="ECO:0007669"/>
    <property type="project" value="UniProtKB-SubCell"/>
</dbReference>
<dbReference type="GO" id="GO:0015935">
    <property type="term" value="C:small ribosomal subunit"/>
    <property type="evidence" value="ECO:0007669"/>
    <property type="project" value="InterPro"/>
</dbReference>
<dbReference type="GO" id="GO:0019843">
    <property type="term" value="F:rRNA binding"/>
    <property type="evidence" value="ECO:0007669"/>
    <property type="project" value="UniProtKB-UniRule"/>
</dbReference>
<dbReference type="GO" id="GO:0003735">
    <property type="term" value="F:structural constituent of ribosome"/>
    <property type="evidence" value="ECO:0007669"/>
    <property type="project" value="InterPro"/>
</dbReference>
<dbReference type="GO" id="GO:0006412">
    <property type="term" value="P:translation"/>
    <property type="evidence" value="ECO:0007669"/>
    <property type="project" value="UniProtKB-UniRule"/>
</dbReference>
<dbReference type="FunFam" id="3.30.860.10:FF:000001">
    <property type="entry name" value="30S ribosomal protein S19"/>
    <property type="match status" value="1"/>
</dbReference>
<dbReference type="Gene3D" id="3.30.860.10">
    <property type="entry name" value="30s Ribosomal Protein S19, Chain A"/>
    <property type="match status" value="1"/>
</dbReference>
<dbReference type="HAMAP" id="MF_00531">
    <property type="entry name" value="Ribosomal_uS19"/>
    <property type="match status" value="1"/>
</dbReference>
<dbReference type="InterPro" id="IPR002222">
    <property type="entry name" value="Ribosomal_uS19"/>
</dbReference>
<dbReference type="InterPro" id="IPR005732">
    <property type="entry name" value="Ribosomal_uS19_bac-type"/>
</dbReference>
<dbReference type="InterPro" id="IPR020934">
    <property type="entry name" value="Ribosomal_uS19_CS"/>
</dbReference>
<dbReference type="InterPro" id="IPR023575">
    <property type="entry name" value="Ribosomal_uS19_SF"/>
</dbReference>
<dbReference type="NCBIfam" id="TIGR01050">
    <property type="entry name" value="rpsS_bact"/>
    <property type="match status" value="1"/>
</dbReference>
<dbReference type="PANTHER" id="PTHR11880">
    <property type="entry name" value="RIBOSOMAL PROTEIN S19P FAMILY MEMBER"/>
    <property type="match status" value="1"/>
</dbReference>
<dbReference type="PANTHER" id="PTHR11880:SF8">
    <property type="entry name" value="SMALL RIBOSOMAL SUBUNIT PROTEIN US19M"/>
    <property type="match status" value="1"/>
</dbReference>
<dbReference type="Pfam" id="PF00203">
    <property type="entry name" value="Ribosomal_S19"/>
    <property type="match status" value="1"/>
</dbReference>
<dbReference type="PIRSF" id="PIRSF002144">
    <property type="entry name" value="Ribosomal_S19"/>
    <property type="match status" value="1"/>
</dbReference>
<dbReference type="PRINTS" id="PR00975">
    <property type="entry name" value="RIBOSOMALS19"/>
</dbReference>
<dbReference type="SUPFAM" id="SSF54570">
    <property type="entry name" value="Ribosomal protein S19"/>
    <property type="match status" value="1"/>
</dbReference>
<dbReference type="PROSITE" id="PS00323">
    <property type="entry name" value="RIBOSOMAL_S19"/>
    <property type="match status" value="1"/>
</dbReference>
<sequence>MARSLKKNPFVGNHLLKKINKLNTKGEKEIIVTWSRASTIIPTMIGHTIAVHNGKDHLPVYITDRMVGHKLGEFAPTRNFRGHVKNDNRSRR</sequence>
<proteinExistence type="inferred from homology"/>
<keyword id="KW-0150">Chloroplast</keyword>
<keyword id="KW-0934">Plastid</keyword>
<keyword id="KW-0687">Ribonucleoprotein</keyword>
<keyword id="KW-0689">Ribosomal protein</keyword>
<keyword id="KW-0694">RNA-binding</keyword>
<keyword id="KW-0699">rRNA-binding</keyword>
<comment type="function">
    <text evidence="1">Protein S19 forms a complex with S13 that binds strongly to the 16S ribosomal RNA.</text>
</comment>
<comment type="subcellular location">
    <subcellularLocation>
        <location>Plastid</location>
        <location>Chloroplast</location>
    </subcellularLocation>
</comment>
<comment type="similarity">
    <text evidence="1">Belongs to the universal ribosomal protein uS19 family.</text>
</comment>